<organism>
    <name type="scientific">Rhodopseudomonas palustris (strain TIE-1)</name>
    <dbReference type="NCBI Taxonomy" id="395960"/>
    <lineage>
        <taxon>Bacteria</taxon>
        <taxon>Pseudomonadati</taxon>
        <taxon>Pseudomonadota</taxon>
        <taxon>Alphaproteobacteria</taxon>
        <taxon>Hyphomicrobiales</taxon>
        <taxon>Nitrobacteraceae</taxon>
        <taxon>Rhodopseudomonas</taxon>
    </lineage>
</organism>
<feature type="chain" id="PRO_1000092578" description="Transcription antitermination protein NusB">
    <location>
        <begin position="1"/>
        <end position="174"/>
    </location>
</feature>
<reference key="1">
    <citation type="submission" date="2008-05" db="EMBL/GenBank/DDBJ databases">
        <title>Complete sequence of Rhodopseudomonas palustris TIE-1.</title>
        <authorList>
            <consortium name="US DOE Joint Genome Institute"/>
            <person name="Lucas S."/>
            <person name="Copeland A."/>
            <person name="Lapidus A."/>
            <person name="Glavina del Rio T."/>
            <person name="Dalin E."/>
            <person name="Tice H."/>
            <person name="Pitluck S."/>
            <person name="Chain P."/>
            <person name="Malfatti S."/>
            <person name="Shin M."/>
            <person name="Vergez L."/>
            <person name="Lang D."/>
            <person name="Schmutz J."/>
            <person name="Larimer F."/>
            <person name="Land M."/>
            <person name="Hauser L."/>
            <person name="Kyrpides N."/>
            <person name="Mikhailova N."/>
            <person name="Emerson D."/>
            <person name="Newman D.K."/>
            <person name="Roden E."/>
            <person name="Richardson P."/>
        </authorList>
    </citation>
    <scope>NUCLEOTIDE SEQUENCE [LARGE SCALE GENOMIC DNA]</scope>
    <source>
        <strain>TIE-1</strain>
    </source>
</reference>
<dbReference type="EMBL" id="CP001096">
    <property type="protein sequence ID" value="ACF01515.1"/>
    <property type="molecule type" value="Genomic_DNA"/>
</dbReference>
<dbReference type="RefSeq" id="WP_012496149.1">
    <property type="nucleotide sequence ID" value="NC_011004.1"/>
</dbReference>
<dbReference type="SMR" id="B3QJK9"/>
<dbReference type="KEGG" id="rpt:Rpal_3009"/>
<dbReference type="HOGENOM" id="CLU_087843_4_0_5"/>
<dbReference type="Proteomes" id="UP000001725">
    <property type="component" value="Chromosome"/>
</dbReference>
<dbReference type="GO" id="GO:0005829">
    <property type="term" value="C:cytosol"/>
    <property type="evidence" value="ECO:0007669"/>
    <property type="project" value="TreeGrafter"/>
</dbReference>
<dbReference type="GO" id="GO:0003723">
    <property type="term" value="F:RNA binding"/>
    <property type="evidence" value="ECO:0007669"/>
    <property type="project" value="UniProtKB-UniRule"/>
</dbReference>
<dbReference type="GO" id="GO:0006353">
    <property type="term" value="P:DNA-templated transcription termination"/>
    <property type="evidence" value="ECO:0007669"/>
    <property type="project" value="UniProtKB-UniRule"/>
</dbReference>
<dbReference type="GO" id="GO:0031564">
    <property type="term" value="P:transcription antitermination"/>
    <property type="evidence" value="ECO:0007669"/>
    <property type="project" value="UniProtKB-KW"/>
</dbReference>
<dbReference type="Gene3D" id="1.10.940.10">
    <property type="entry name" value="NusB-like"/>
    <property type="match status" value="1"/>
</dbReference>
<dbReference type="HAMAP" id="MF_00073">
    <property type="entry name" value="NusB"/>
    <property type="match status" value="1"/>
</dbReference>
<dbReference type="InterPro" id="IPR035926">
    <property type="entry name" value="NusB-like_sf"/>
</dbReference>
<dbReference type="InterPro" id="IPR011605">
    <property type="entry name" value="NusB_fam"/>
</dbReference>
<dbReference type="InterPro" id="IPR006027">
    <property type="entry name" value="NusB_RsmB_TIM44"/>
</dbReference>
<dbReference type="NCBIfam" id="TIGR01951">
    <property type="entry name" value="nusB"/>
    <property type="match status" value="1"/>
</dbReference>
<dbReference type="PANTHER" id="PTHR11078:SF3">
    <property type="entry name" value="ANTITERMINATION NUSB DOMAIN-CONTAINING PROTEIN"/>
    <property type="match status" value="1"/>
</dbReference>
<dbReference type="PANTHER" id="PTHR11078">
    <property type="entry name" value="N UTILIZATION SUBSTANCE PROTEIN B-RELATED"/>
    <property type="match status" value="1"/>
</dbReference>
<dbReference type="Pfam" id="PF01029">
    <property type="entry name" value="NusB"/>
    <property type="match status" value="1"/>
</dbReference>
<dbReference type="SUPFAM" id="SSF48013">
    <property type="entry name" value="NusB-like"/>
    <property type="match status" value="1"/>
</dbReference>
<accession>B3QJK9</accession>
<evidence type="ECO:0000255" key="1">
    <source>
        <dbReference type="HAMAP-Rule" id="MF_00073"/>
    </source>
</evidence>
<keyword id="KW-0694">RNA-binding</keyword>
<keyword id="KW-0804">Transcription</keyword>
<keyword id="KW-0889">Transcription antitermination</keyword>
<keyword id="KW-0805">Transcription regulation</keyword>
<sequence length="174" mass="19505">MAEINKPAFKKPDLKKMTPKGERKANRRGAARLAAVQALYQMDIGGAGINETFAEFESFWIGNEVEGEQYLPAEAAFFRDIVAGVVREQKQIDPLIDDLLARGWPLARIDAILRAVMRAGAYELEHRKDIPARVVVSEYVDVAHAFVEKDETGMVNAVLDQIARRFRAEEFSKG</sequence>
<comment type="function">
    <text evidence="1">Involved in transcription antitermination. Required for transcription of ribosomal RNA (rRNA) genes. Binds specifically to the boxA antiterminator sequence of the ribosomal RNA (rrn) operons.</text>
</comment>
<comment type="similarity">
    <text evidence="1">Belongs to the NusB family.</text>
</comment>
<protein>
    <recommendedName>
        <fullName evidence="1">Transcription antitermination protein NusB</fullName>
    </recommendedName>
    <alternativeName>
        <fullName evidence="1">Antitermination factor NusB</fullName>
    </alternativeName>
</protein>
<gene>
    <name evidence="1" type="primary">nusB</name>
    <name type="ordered locus">Rpal_3009</name>
</gene>
<name>NUSB_RHOPT</name>
<proteinExistence type="inferred from homology"/>